<name>ZG16_RAT</name>
<feature type="signal peptide" evidence="1">
    <location>
        <begin position="1"/>
        <end position="16"/>
    </location>
</feature>
<feature type="chain" id="PRO_0000017572" description="Zymogen granule membrane protein 16">
    <location>
        <begin position="17"/>
        <end position="167"/>
    </location>
</feature>
<feature type="domain" description="Jacalin-type lectin" evidence="3">
    <location>
        <begin position="24"/>
        <end position="159"/>
    </location>
</feature>
<feature type="sequence conflict" description="In Ref. 1; CAA83059." evidence="6" ref="1">
    <original>QGDL</original>
    <variation>RET</variation>
    <location>
        <begin position="80"/>
        <end position="83"/>
    </location>
</feature>
<gene>
    <name type="primary">Zg16</name>
</gene>
<keyword id="KW-0968">Cytoplasmic vesicle</keyword>
<keyword id="KW-0272">Extracellular matrix</keyword>
<keyword id="KW-0333">Golgi apparatus</keyword>
<keyword id="KW-0430">Lectin</keyword>
<keyword id="KW-0653">Protein transport</keyword>
<keyword id="KW-1185">Reference proteome</keyword>
<keyword id="KW-0964">Secreted</keyword>
<keyword id="KW-0732">Signal</keyword>
<keyword id="KW-0813">Transport</keyword>
<organism>
    <name type="scientific">Rattus norvegicus</name>
    <name type="common">Rat</name>
    <dbReference type="NCBI Taxonomy" id="10116"/>
    <lineage>
        <taxon>Eukaryota</taxon>
        <taxon>Metazoa</taxon>
        <taxon>Chordata</taxon>
        <taxon>Craniata</taxon>
        <taxon>Vertebrata</taxon>
        <taxon>Euteleostomi</taxon>
        <taxon>Mammalia</taxon>
        <taxon>Eutheria</taxon>
        <taxon>Euarchontoglires</taxon>
        <taxon>Glires</taxon>
        <taxon>Rodentia</taxon>
        <taxon>Myomorpha</taxon>
        <taxon>Muroidea</taxon>
        <taxon>Muridae</taxon>
        <taxon>Murinae</taxon>
        <taxon>Rattus</taxon>
    </lineage>
</organism>
<proteinExistence type="evidence at transcript level"/>
<sequence>MLAIALLVLLCASASANSIQSRSSSYSGEYGGKGGKRFSHSGNQLDGPITAIRIRVNRYYIIGLQVRYGTVWSDYVGGNQGDLEEIFLHPGESVIQVSGKYKSYVKQLIFVTDKGRYLPFGKDSGTSFNAVPLHPNTVLRFISGRSGSAIDAISLHWDTYPSHCNTC</sequence>
<evidence type="ECO:0000250" key="1"/>
<evidence type="ECO:0000250" key="2">
    <source>
        <dbReference type="UniProtKB" id="O60844"/>
    </source>
</evidence>
<evidence type="ECO:0000255" key="3">
    <source>
        <dbReference type="PROSITE-ProRule" id="PRU01088"/>
    </source>
</evidence>
<evidence type="ECO:0000269" key="4">
    <source>
    </source>
</evidence>
<evidence type="ECO:0000269" key="5">
    <source>
    </source>
</evidence>
<evidence type="ECO:0000305" key="6"/>
<reference key="1">
    <citation type="journal article" date="1994" name="Eur. J. Cell Biol.">
        <title>cDNA cloning and characterization of a novel 16 kDa protein located in zymogen granules of rat pancreas and goblet cells of the gut.</title>
        <authorList>
            <person name="Cronshagen U."/>
            <person name="Voland P."/>
            <person name="Kern H.-F."/>
        </authorList>
    </citation>
    <scope>NUCLEOTIDE SEQUENCE [MRNA]</scope>
    <scope>TISSUE SPECIFICITY</scope>
    <scope>SUBCELLULAR LOCATION</scope>
    <source>
        <strain>Wistar</strain>
        <tissue>Pancreas</tissue>
    </source>
</reference>
<reference key="2">
    <citation type="submission" date="2002-11" db="EMBL/GenBank/DDBJ databases">
        <title>Expression of rat ZG16p in AR42J cells.</title>
        <authorList>
            <person name="Matsuda Y."/>
            <person name="Kojima-Aikawa K."/>
        </authorList>
    </citation>
    <scope>NUCLEOTIDE SEQUENCE [MRNA]</scope>
</reference>
<reference key="3">
    <citation type="journal article" date="1999" name="Eur. J. Cell Biol.">
        <title>The secretory lectin ZG16p mediates sorting of enzyme proteins to the zymogen granule membrane in pancreatic acinar cells.</title>
        <authorList>
            <person name="Kleene R."/>
            <person name="Dartsch H."/>
            <person name="Kern H.-F."/>
        </authorList>
    </citation>
    <scope>FUNCTION</scope>
    <scope>SUBCELLULAR LOCATION</scope>
</reference>
<protein>
    <recommendedName>
        <fullName>Zymogen granule membrane protein 16</fullName>
        <shortName>Zymogen granule protein 16</shortName>
    </recommendedName>
    <alternativeName>
        <fullName>Secretory lectin ZG16</fullName>
    </alternativeName>
</protein>
<accession>Q8CJD3</accession>
<accession>Q63680</accession>
<comment type="function">
    <text evidence="4">May play a role in protein trafficking. May act as a linker molecule between the submembranous matrix on the luminal side of zymogen granule membrane (ZGM) and aggregated secretory proteins during granule formation in the TGN.</text>
</comment>
<comment type="subcellular location">
    <subcellularLocation>
        <location evidence="2">Secreted</location>
        <location evidence="2">Extracellular space</location>
        <location evidence="2">Extracellular matrix</location>
    </subcellularLocation>
    <subcellularLocation>
        <location evidence="4 5">Zymogen granule lumen</location>
    </subcellularLocation>
    <subcellularLocation>
        <location evidence="4">Golgi apparatus lumen</location>
    </subcellularLocation>
</comment>
<comment type="tissue specificity">
    <text evidence="5">Expressed in pancreas, colon, duodenum, and much less in stomach.</text>
</comment>
<comment type="similarity">
    <text evidence="3 6">Belongs to the jacalin lectin family.</text>
</comment>
<comment type="sequence caution" evidence="6">
    <conflict type="frameshift">
        <sequence resource="EMBL-CDS" id="CAA83059"/>
    </conflict>
</comment>
<dbReference type="EMBL" id="Z30584">
    <property type="protein sequence ID" value="CAA83059.1"/>
    <property type="status" value="ALT_FRAME"/>
    <property type="molecule type" value="mRNA"/>
</dbReference>
<dbReference type="EMBL" id="AB095177">
    <property type="protein sequence ID" value="BAC24023.1"/>
    <property type="molecule type" value="mRNA"/>
</dbReference>
<dbReference type="PIR" id="S42924">
    <property type="entry name" value="S42924"/>
</dbReference>
<dbReference type="RefSeq" id="NP_599236.2">
    <property type="nucleotide sequence ID" value="NM_134409.2"/>
</dbReference>
<dbReference type="SMR" id="Q8CJD3"/>
<dbReference type="FunCoup" id="Q8CJD3">
    <property type="interactions" value="3"/>
</dbReference>
<dbReference type="STRING" id="10116.ENSRNOP00000022758"/>
<dbReference type="PhosphoSitePlus" id="Q8CJD3"/>
<dbReference type="PaxDb" id="10116-ENSRNOP00000022758"/>
<dbReference type="Ensembl" id="ENSRNOT00000022758.5">
    <property type="protein sequence ID" value="ENSRNOP00000022758.2"/>
    <property type="gene ID" value="ENSRNOG00000016857.5"/>
</dbReference>
<dbReference type="GeneID" id="171449"/>
<dbReference type="KEGG" id="rno:171449"/>
<dbReference type="UCSC" id="RGD:620346">
    <property type="organism name" value="rat"/>
</dbReference>
<dbReference type="AGR" id="RGD:620346"/>
<dbReference type="CTD" id="653808"/>
<dbReference type="RGD" id="620346">
    <property type="gene designation" value="Zg16"/>
</dbReference>
<dbReference type="eggNOG" id="ENOG502S4MA">
    <property type="taxonomic scope" value="Eukaryota"/>
</dbReference>
<dbReference type="GeneTree" id="ENSGT00940000159195"/>
<dbReference type="HOGENOM" id="CLU_104246_0_0_1"/>
<dbReference type="InParanoid" id="Q8CJD3"/>
<dbReference type="OMA" id="DVYPSTC"/>
<dbReference type="OrthoDB" id="2415936at2759"/>
<dbReference type="PhylomeDB" id="Q8CJD3"/>
<dbReference type="TreeFam" id="TF333440"/>
<dbReference type="PRO" id="PR:Q8CJD3"/>
<dbReference type="Proteomes" id="UP000002494">
    <property type="component" value="Chromosome 1"/>
</dbReference>
<dbReference type="Bgee" id="ENSRNOG00000016857">
    <property type="expression patterns" value="Expressed in jejunum and 13 other cell types or tissues"/>
</dbReference>
<dbReference type="GO" id="GO:0062023">
    <property type="term" value="C:collagen-containing extracellular matrix"/>
    <property type="evidence" value="ECO:0000250"/>
    <property type="project" value="UniProtKB"/>
</dbReference>
<dbReference type="GO" id="GO:0005615">
    <property type="term" value="C:extracellular space"/>
    <property type="evidence" value="ECO:0000318"/>
    <property type="project" value="GO_Central"/>
</dbReference>
<dbReference type="GO" id="GO:0005796">
    <property type="term" value="C:Golgi lumen"/>
    <property type="evidence" value="ECO:0000250"/>
    <property type="project" value="UniProtKB"/>
</dbReference>
<dbReference type="GO" id="GO:0070701">
    <property type="term" value="C:mucus layer"/>
    <property type="evidence" value="ECO:0000266"/>
    <property type="project" value="RGD"/>
</dbReference>
<dbReference type="GO" id="GO:0042589">
    <property type="term" value="C:zymogen granule membrane"/>
    <property type="evidence" value="ECO:0000314"/>
    <property type="project" value="RGD"/>
</dbReference>
<dbReference type="GO" id="GO:0030246">
    <property type="term" value="F:carbohydrate binding"/>
    <property type="evidence" value="ECO:0007669"/>
    <property type="project" value="UniProtKB-KW"/>
</dbReference>
<dbReference type="GO" id="GO:0042834">
    <property type="term" value="F:peptidoglycan binding"/>
    <property type="evidence" value="ECO:0000266"/>
    <property type="project" value="RGD"/>
</dbReference>
<dbReference type="GO" id="GO:0050830">
    <property type="term" value="P:defense response to Gram-positive bacterium"/>
    <property type="evidence" value="ECO:0000266"/>
    <property type="project" value="RGD"/>
</dbReference>
<dbReference type="GO" id="GO:0015031">
    <property type="term" value="P:protein transport"/>
    <property type="evidence" value="ECO:0007669"/>
    <property type="project" value="UniProtKB-KW"/>
</dbReference>
<dbReference type="GO" id="GO:0052373">
    <property type="term" value="P:suppression of symbiont entry into host"/>
    <property type="evidence" value="ECO:0000266"/>
    <property type="project" value="RGD"/>
</dbReference>
<dbReference type="CDD" id="cd09611">
    <property type="entry name" value="Jacalin_ZG16_like"/>
    <property type="match status" value="1"/>
</dbReference>
<dbReference type="FunFam" id="2.100.10.30:FF:000002">
    <property type="entry name" value="Zymogen granule membrane protein 16"/>
    <property type="match status" value="1"/>
</dbReference>
<dbReference type="Gene3D" id="2.100.10.30">
    <property type="entry name" value="Jacalin-like lectin domain"/>
    <property type="match status" value="1"/>
</dbReference>
<dbReference type="InterPro" id="IPR001229">
    <property type="entry name" value="Jacalin-like_lectin_dom"/>
</dbReference>
<dbReference type="InterPro" id="IPR036404">
    <property type="entry name" value="Jacalin-like_lectin_dom_sf"/>
</dbReference>
<dbReference type="InterPro" id="IPR052321">
    <property type="entry name" value="PolyBind_ProtTraffic"/>
</dbReference>
<dbReference type="PANTHER" id="PTHR33589">
    <property type="entry name" value="OS11G0524900 PROTEIN"/>
    <property type="match status" value="1"/>
</dbReference>
<dbReference type="PANTHER" id="PTHR33589:SF4">
    <property type="entry name" value="ZYMOGEN GRANULE MEMBRANE PROTEIN 16"/>
    <property type="match status" value="1"/>
</dbReference>
<dbReference type="Pfam" id="PF01419">
    <property type="entry name" value="Jacalin"/>
    <property type="match status" value="1"/>
</dbReference>
<dbReference type="SMART" id="SM00915">
    <property type="entry name" value="Jacalin"/>
    <property type="match status" value="1"/>
</dbReference>
<dbReference type="SUPFAM" id="SSF51101">
    <property type="entry name" value="Mannose-binding lectins"/>
    <property type="match status" value="1"/>
</dbReference>
<dbReference type="PROSITE" id="PS51752">
    <property type="entry name" value="JACALIN_LECTIN"/>
    <property type="match status" value="1"/>
</dbReference>